<proteinExistence type="inferred from homology"/>
<reference key="1">
    <citation type="journal article" date="2007" name="PLoS Genet.">
        <title>Meningococcal genetic variation mechanisms viewed through comparative analysis of serogroup C strain FAM18.</title>
        <authorList>
            <person name="Bentley S.D."/>
            <person name="Vernikos G.S."/>
            <person name="Snyder L.A.S."/>
            <person name="Churcher C."/>
            <person name="Arrowsmith C."/>
            <person name="Chillingworth T."/>
            <person name="Cronin A."/>
            <person name="Davis P.H."/>
            <person name="Holroyd N.E."/>
            <person name="Jagels K."/>
            <person name="Maddison M."/>
            <person name="Moule S."/>
            <person name="Rabbinowitsch E."/>
            <person name="Sharp S."/>
            <person name="Unwin L."/>
            <person name="Whitehead S."/>
            <person name="Quail M.A."/>
            <person name="Achtman M."/>
            <person name="Barrell B.G."/>
            <person name="Saunders N.J."/>
            <person name="Parkhill J."/>
        </authorList>
    </citation>
    <scope>NUCLEOTIDE SEQUENCE [LARGE SCALE GENOMIC DNA]</scope>
    <source>
        <strain>ATCC 700532 / DSM 15464 / FAM18</strain>
    </source>
</reference>
<comment type="function">
    <text evidence="1">One of several proteins that assist in the late maturation steps of the functional core of the 30S ribosomal subunit. Associates with free 30S ribosomal subunits (but not with 30S subunits that are part of 70S ribosomes or polysomes). Required for efficient processing of 16S rRNA. May interact with the 5'-terminal helix region of 16S rRNA.</text>
</comment>
<comment type="subunit">
    <text evidence="1">Monomer. Binds 30S ribosomal subunits, but not 50S ribosomal subunits or 70S ribosomes.</text>
</comment>
<comment type="subcellular location">
    <subcellularLocation>
        <location evidence="1">Cytoplasm</location>
    </subcellularLocation>
</comment>
<comment type="similarity">
    <text evidence="1">Belongs to the RbfA family.</text>
</comment>
<evidence type="ECO:0000255" key="1">
    <source>
        <dbReference type="HAMAP-Rule" id="MF_00003"/>
    </source>
</evidence>
<keyword id="KW-0963">Cytoplasm</keyword>
<keyword id="KW-0690">Ribosome biogenesis</keyword>
<accession>A1KUJ5</accession>
<dbReference type="EMBL" id="AM421808">
    <property type="protein sequence ID" value="CAM10538.1"/>
    <property type="molecule type" value="Genomic_DNA"/>
</dbReference>
<dbReference type="RefSeq" id="WP_002220822.1">
    <property type="nucleotide sequence ID" value="NC_008767.1"/>
</dbReference>
<dbReference type="SMR" id="A1KUJ5"/>
<dbReference type="KEGG" id="nmc:NMC1308"/>
<dbReference type="HOGENOM" id="CLU_089475_5_0_4"/>
<dbReference type="Proteomes" id="UP000002286">
    <property type="component" value="Chromosome"/>
</dbReference>
<dbReference type="GO" id="GO:0005829">
    <property type="term" value="C:cytosol"/>
    <property type="evidence" value="ECO:0007669"/>
    <property type="project" value="TreeGrafter"/>
</dbReference>
<dbReference type="GO" id="GO:0043024">
    <property type="term" value="F:ribosomal small subunit binding"/>
    <property type="evidence" value="ECO:0007669"/>
    <property type="project" value="TreeGrafter"/>
</dbReference>
<dbReference type="GO" id="GO:0030490">
    <property type="term" value="P:maturation of SSU-rRNA"/>
    <property type="evidence" value="ECO:0007669"/>
    <property type="project" value="UniProtKB-UniRule"/>
</dbReference>
<dbReference type="Gene3D" id="3.30.300.20">
    <property type="match status" value="1"/>
</dbReference>
<dbReference type="HAMAP" id="MF_00003">
    <property type="entry name" value="RbfA"/>
    <property type="match status" value="1"/>
</dbReference>
<dbReference type="InterPro" id="IPR015946">
    <property type="entry name" value="KH_dom-like_a/b"/>
</dbReference>
<dbReference type="InterPro" id="IPR000238">
    <property type="entry name" value="RbfA"/>
</dbReference>
<dbReference type="InterPro" id="IPR023799">
    <property type="entry name" value="RbfA_dom_sf"/>
</dbReference>
<dbReference type="InterPro" id="IPR020053">
    <property type="entry name" value="Ribosome-bd_factorA_CS"/>
</dbReference>
<dbReference type="NCBIfam" id="TIGR00082">
    <property type="entry name" value="rbfA"/>
    <property type="match status" value="1"/>
</dbReference>
<dbReference type="PANTHER" id="PTHR33515">
    <property type="entry name" value="RIBOSOME-BINDING FACTOR A, CHLOROPLASTIC-RELATED"/>
    <property type="match status" value="1"/>
</dbReference>
<dbReference type="PANTHER" id="PTHR33515:SF1">
    <property type="entry name" value="RIBOSOME-BINDING FACTOR A, CHLOROPLASTIC-RELATED"/>
    <property type="match status" value="1"/>
</dbReference>
<dbReference type="Pfam" id="PF02033">
    <property type="entry name" value="RBFA"/>
    <property type="match status" value="1"/>
</dbReference>
<dbReference type="SUPFAM" id="SSF89919">
    <property type="entry name" value="Ribosome-binding factor A, RbfA"/>
    <property type="match status" value="1"/>
</dbReference>
<dbReference type="PROSITE" id="PS01319">
    <property type="entry name" value="RBFA"/>
    <property type="match status" value="1"/>
</dbReference>
<sequence>MRKPQRGYARQDRVKEQIMRELAELVRTGLKDPRAGFITVNEVEVTRDYSHATVFYTILNQDAREITEEVLEHARGHLRSELAKRIKLFKTPELHFKYDESLERGLNLSALIDQVAAEKPVED</sequence>
<protein>
    <recommendedName>
        <fullName evidence="1">Ribosome-binding factor A</fullName>
    </recommendedName>
</protein>
<gene>
    <name evidence="1" type="primary">rbfA</name>
    <name type="ordered locus">NMC1308</name>
</gene>
<feature type="chain" id="PRO_1000000152" description="Ribosome-binding factor A">
    <location>
        <begin position="1"/>
        <end position="123"/>
    </location>
</feature>
<name>RBFA_NEIMF</name>
<organism>
    <name type="scientific">Neisseria meningitidis serogroup C / serotype 2a (strain ATCC 700532 / DSM 15464 / FAM18)</name>
    <dbReference type="NCBI Taxonomy" id="272831"/>
    <lineage>
        <taxon>Bacteria</taxon>
        <taxon>Pseudomonadati</taxon>
        <taxon>Pseudomonadota</taxon>
        <taxon>Betaproteobacteria</taxon>
        <taxon>Neisseriales</taxon>
        <taxon>Neisseriaceae</taxon>
        <taxon>Neisseria</taxon>
    </lineage>
</organism>